<gene>
    <name type="ORF">LbrM15_V2.0550</name>
    <name type="ORF">LbrM_15_0550</name>
</gene>
<accession>A4H824</accession>
<feature type="chain" id="PRO_0000291597" description="Ecotin-like protein 3">
    <location>
        <begin position="1"/>
        <end position="309"/>
    </location>
</feature>
<feature type="region of interest" description="Disordered" evidence="1">
    <location>
        <begin position="140"/>
        <end position="309"/>
    </location>
</feature>
<feature type="compositionally biased region" description="Basic and acidic residues" evidence="1">
    <location>
        <begin position="156"/>
        <end position="167"/>
    </location>
</feature>
<feature type="compositionally biased region" description="Low complexity" evidence="1">
    <location>
        <begin position="168"/>
        <end position="180"/>
    </location>
</feature>
<feature type="compositionally biased region" description="Basic and acidic residues" evidence="1">
    <location>
        <begin position="181"/>
        <end position="190"/>
    </location>
</feature>
<feature type="compositionally biased region" description="Low complexity" evidence="1">
    <location>
        <begin position="196"/>
        <end position="205"/>
    </location>
</feature>
<feature type="compositionally biased region" description="Polar residues" evidence="1">
    <location>
        <begin position="209"/>
        <end position="221"/>
    </location>
</feature>
<feature type="compositionally biased region" description="Basic and acidic residues" evidence="1">
    <location>
        <begin position="261"/>
        <end position="279"/>
    </location>
</feature>
<feature type="compositionally biased region" description="Low complexity" evidence="1">
    <location>
        <begin position="290"/>
        <end position="299"/>
    </location>
</feature>
<keyword id="KW-1185">Reference proteome</keyword>
<organism>
    <name type="scientific">Leishmania braziliensis</name>
    <dbReference type="NCBI Taxonomy" id="5660"/>
    <lineage>
        <taxon>Eukaryota</taxon>
        <taxon>Discoba</taxon>
        <taxon>Euglenozoa</taxon>
        <taxon>Kinetoplastea</taxon>
        <taxon>Metakinetoplastina</taxon>
        <taxon>Trypanosomatida</taxon>
        <taxon>Trypanosomatidae</taxon>
        <taxon>Leishmaniinae</taxon>
        <taxon>Leishmania</taxon>
        <taxon>Leishmania braziliensis species complex</taxon>
    </lineage>
</organism>
<proteinExistence type="inferred from homology"/>
<dbReference type="EMBL" id="FR798989">
    <property type="protein sequence ID" value="CAM42072.1"/>
    <property type="molecule type" value="Genomic_DNA"/>
</dbReference>
<dbReference type="RefSeq" id="XP_001563503.1">
    <property type="nucleotide sequence ID" value="XM_001563453.1"/>
</dbReference>
<dbReference type="SMR" id="A4H824"/>
<dbReference type="MEROPS" id="I11.004"/>
<dbReference type="GeneID" id="5414021"/>
<dbReference type="KEGG" id="lbz:LBRM_15_0550"/>
<dbReference type="VEuPathDB" id="TriTrypDB:LbrM.15.0550"/>
<dbReference type="InParanoid" id="A4H824"/>
<dbReference type="OMA" id="PGRHENC"/>
<dbReference type="Proteomes" id="UP000007258">
    <property type="component" value="Chromosome 15"/>
</dbReference>
<dbReference type="GO" id="GO:0004867">
    <property type="term" value="F:serine-type endopeptidase inhibitor activity"/>
    <property type="evidence" value="ECO:0007669"/>
    <property type="project" value="InterPro"/>
</dbReference>
<dbReference type="Gene3D" id="2.60.40.550">
    <property type="entry name" value="Ecotin"/>
    <property type="match status" value="1"/>
</dbReference>
<dbReference type="Gene3D" id="4.10.1230.10">
    <property type="entry name" value="Ecotin, trypsin inhibitor"/>
    <property type="match status" value="1"/>
</dbReference>
<dbReference type="InterPro" id="IPR027438">
    <property type="entry name" value="Ecotin_C"/>
</dbReference>
<dbReference type="InterPro" id="IPR036198">
    <property type="entry name" value="Ecotin_sf"/>
</dbReference>
<dbReference type="InterPro" id="IPR005658">
    <property type="entry name" value="Prot_inh_ecotin"/>
</dbReference>
<dbReference type="PANTHER" id="PTHR35890">
    <property type="match status" value="1"/>
</dbReference>
<dbReference type="PANTHER" id="PTHR35890:SF3">
    <property type="entry name" value="ECOTIN"/>
    <property type="match status" value="1"/>
</dbReference>
<dbReference type="Pfam" id="PF03974">
    <property type="entry name" value="Ecotin"/>
    <property type="match status" value="1"/>
</dbReference>
<dbReference type="SUPFAM" id="SSF49772">
    <property type="entry name" value="Ecotin, trypsin inhibitor"/>
    <property type="match status" value="1"/>
</dbReference>
<comment type="similarity">
    <text evidence="2">Belongs to the protease inhibitor I11 (ecotin) family.</text>
</comment>
<sequence>MPSLEDYRIPYPAAGPCQKRTVIYLPQQDSAVEQHHLRVQLIPGRHVRCEDGCFYQLTGTVSEETLQSWGYPYYVVTLDDIYPAQCSPSDPANPRTFVPLRESPMIPYNSKRPIVVYVPEDAEVRYRVWCSDVLQVQESQQELEAPAVSQSCPVPVRERQNNPEGHAHPVVVHSVESPEVSGHKDGDQPMKKSSKLKQSCSNSSRSLKHSASGSSPKNTPLFSRESVPPEHSLSAAQQRRRSNENSAIDETGGGASRKKRSDSTSSRKDDQDSGYEKKVKNLWNRARGNSSPKRSASPKKSGRDSRRNS</sequence>
<reference key="1">
    <citation type="journal article" date="2007" name="Nat. Genet.">
        <title>Comparative genomic analysis of three Leishmania species that cause diverse human disease.</title>
        <authorList>
            <person name="Peacock C.S."/>
            <person name="Seeger K."/>
            <person name="Harris D."/>
            <person name="Murphy L."/>
            <person name="Ruiz J.C."/>
            <person name="Quail M.A."/>
            <person name="Peters N."/>
            <person name="Adlem E."/>
            <person name="Tivey A."/>
            <person name="Aslett M."/>
            <person name="Kerhornou A."/>
            <person name="Ivens A."/>
            <person name="Fraser A."/>
            <person name="Rajandream M.-A."/>
            <person name="Carver T."/>
            <person name="Norbertczak H."/>
            <person name="Chillingworth T."/>
            <person name="Hance Z."/>
            <person name="Jagels K."/>
            <person name="Moule S."/>
            <person name="Ormond D."/>
            <person name="Rutter S."/>
            <person name="Sqaures R."/>
            <person name="Whitehead S."/>
            <person name="Rabbinowitsch E."/>
            <person name="Arrowsmith C."/>
            <person name="White B."/>
            <person name="Thurston S."/>
            <person name="Bringaud F."/>
            <person name="Baldauf S.L."/>
            <person name="Faulconbridge A."/>
            <person name="Jeffares D."/>
            <person name="Depledge D.P."/>
            <person name="Oyola S.O."/>
            <person name="Hilley J.D."/>
            <person name="Brito L.O."/>
            <person name="Tosi L.R.O."/>
            <person name="Barrell B."/>
            <person name="Cruz A.K."/>
            <person name="Mottram J.C."/>
            <person name="Smith D.F."/>
            <person name="Berriman M."/>
        </authorList>
    </citation>
    <scope>NUCLEOTIDE SEQUENCE [LARGE SCALE GENOMIC DNA]</scope>
    <source>
        <strain>MHOM/BR/75/M2904</strain>
    </source>
</reference>
<name>ECOT3_LEIBR</name>
<protein>
    <recommendedName>
        <fullName>Ecotin-like protein 3</fullName>
    </recommendedName>
</protein>
<evidence type="ECO:0000256" key="1">
    <source>
        <dbReference type="SAM" id="MobiDB-lite"/>
    </source>
</evidence>
<evidence type="ECO:0000305" key="2"/>